<protein>
    <recommendedName>
        <fullName>Probable carboxylesterase 3</fullName>
    </recommendedName>
    <alternativeName>
        <fullName>AtCXE3</fullName>
        <ecNumber>3.1.1.1</ecNumber>
    </alternativeName>
</protein>
<comment type="function">
    <text evidence="1">Carboxylesterase acting on esters with varying acyl chain length.</text>
</comment>
<comment type="catalytic activity">
    <reaction>
        <text>a carboxylic ester + H2O = an alcohol + a carboxylate + H(+)</text>
        <dbReference type="Rhea" id="RHEA:21164"/>
        <dbReference type="ChEBI" id="CHEBI:15377"/>
        <dbReference type="ChEBI" id="CHEBI:15378"/>
        <dbReference type="ChEBI" id="CHEBI:29067"/>
        <dbReference type="ChEBI" id="CHEBI:30879"/>
        <dbReference type="ChEBI" id="CHEBI:33308"/>
        <dbReference type="EC" id="3.1.1.1"/>
    </reaction>
</comment>
<comment type="tissue specificity">
    <text evidence="4">Expressed in flowers and siliques.</text>
</comment>
<comment type="similarity">
    <text evidence="5">Belongs to the 'GDXG' lipolytic enzyme family.</text>
</comment>
<sequence>MESDLTTEHHLPFIRIHKNGRVERLSGNDIKPTSLNPQNDVVSKDVMYSSDHNLSVRMFLPNKSRKLDTAGNKIPLLIYFHGGAYIIQSPFSPVYHNYLTEVVITANCLAVSVQYRLAPEHPVPAAYDDSWSAIQWIFSHSDDWINEYADFDRVFIAGDSAGANISHHMGIRAGKEKLSPTIKGIVMVHPGFWGKEPIDEHDVQDGEVRNKIAYIWENIVSPNSVDGVNDPWFNVVGSGSDVSEMGCEKVLVAVAGKDVFWRQGLAYAAKLEKSQWKGSVEVIEEEEEGHCFHLHNHNSQNASKLMQKFLEFIIS</sequence>
<feature type="chain" id="PRO_0000402549" description="Probable carboxylesterase 3">
    <location>
        <begin position="1"/>
        <end position="315"/>
    </location>
</feature>
<feature type="short sequence motif" description="Involved in the stabilization of the negatively charged intermediate by the formation of the oxyanion hole" evidence="2">
    <location>
        <begin position="81"/>
        <end position="83"/>
    </location>
</feature>
<feature type="active site" evidence="2">
    <location>
        <position position="160"/>
    </location>
</feature>
<feature type="active site" evidence="2">
    <location>
        <position position="258"/>
    </location>
</feature>
<feature type="active site" evidence="2">
    <location>
        <position position="290"/>
    </location>
</feature>
<feature type="modified residue" description="N-acetylmethionine" evidence="3">
    <location>
        <position position="1"/>
    </location>
</feature>
<organism>
    <name type="scientific">Arabidopsis thaliana</name>
    <name type="common">Mouse-ear cress</name>
    <dbReference type="NCBI Taxonomy" id="3702"/>
    <lineage>
        <taxon>Eukaryota</taxon>
        <taxon>Viridiplantae</taxon>
        <taxon>Streptophyta</taxon>
        <taxon>Embryophyta</taxon>
        <taxon>Tracheophyta</taxon>
        <taxon>Spermatophyta</taxon>
        <taxon>Magnoliopsida</taxon>
        <taxon>eudicotyledons</taxon>
        <taxon>Gunneridae</taxon>
        <taxon>Pentapetalae</taxon>
        <taxon>rosids</taxon>
        <taxon>malvids</taxon>
        <taxon>Brassicales</taxon>
        <taxon>Brassicaceae</taxon>
        <taxon>Camelineae</taxon>
        <taxon>Arabidopsis</taxon>
    </lineage>
</organism>
<proteinExistence type="evidence at transcript level"/>
<reference key="1">
    <citation type="journal article" date="2000" name="Nature">
        <title>Sequence and analysis of chromosome 1 of the plant Arabidopsis thaliana.</title>
        <authorList>
            <person name="Theologis A."/>
            <person name="Ecker J.R."/>
            <person name="Palm C.J."/>
            <person name="Federspiel N.A."/>
            <person name="Kaul S."/>
            <person name="White O."/>
            <person name="Alonso J."/>
            <person name="Altafi H."/>
            <person name="Araujo R."/>
            <person name="Bowman C.L."/>
            <person name="Brooks S.Y."/>
            <person name="Buehler E."/>
            <person name="Chan A."/>
            <person name="Chao Q."/>
            <person name="Chen H."/>
            <person name="Cheuk R.F."/>
            <person name="Chin C.W."/>
            <person name="Chung M.K."/>
            <person name="Conn L."/>
            <person name="Conway A.B."/>
            <person name="Conway A.R."/>
            <person name="Creasy T.H."/>
            <person name="Dewar K."/>
            <person name="Dunn P."/>
            <person name="Etgu P."/>
            <person name="Feldblyum T.V."/>
            <person name="Feng J.-D."/>
            <person name="Fong B."/>
            <person name="Fujii C.Y."/>
            <person name="Gill J.E."/>
            <person name="Goldsmith A.D."/>
            <person name="Haas B."/>
            <person name="Hansen N.F."/>
            <person name="Hughes B."/>
            <person name="Huizar L."/>
            <person name="Hunter J.L."/>
            <person name="Jenkins J."/>
            <person name="Johnson-Hopson C."/>
            <person name="Khan S."/>
            <person name="Khaykin E."/>
            <person name="Kim C.J."/>
            <person name="Koo H.L."/>
            <person name="Kremenetskaia I."/>
            <person name="Kurtz D.B."/>
            <person name="Kwan A."/>
            <person name="Lam B."/>
            <person name="Langin-Hooper S."/>
            <person name="Lee A."/>
            <person name="Lee J.M."/>
            <person name="Lenz C.A."/>
            <person name="Li J.H."/>
            <person name="Li Y.-P."/>
            <person name="Lin X."/>
            <person name="Liu S.X."/>
            <person name="Liu Z.A."/>
            <person name="Luros J.S."/>
            <person name="Maiti R."/>
            <person name="Marziali A."/>
            <person name="Militscher J."/>
            <person name="Miranda M."/>
            <person name="Nguyen M."/>
            <person name="Nierman W.C."/>
            <person name="Osborne B.I."/>
            <person name="Pai G."/>
            <person name="Peterson J."/>
            <person name="Pham P.K."/>
            <person name="Rizzo M."/>
            <person name="Rooney T."/>
            <person name="Rowley D."/>
            <person name="Sakano H."/>
            <person name="Salzberg S.L."/>
            <person name="Schwartz J.R."/>
            <person name="Shinn P."/>
            <person name="Southwick A.M."/>
            <person name="Sun H."/>
            <person name="Tallon L.J."/>
            <person name="Tambunga G."/>
            <person name="Toriumi M.J."/>
            <person name="Town C.D."/>
            <person name="Utterback T."/>
            <person name="Van Aken S."/>
            <person name="Vaysberg M."/>
            <person name="Vysotskaia V.S."/>
            <person name="Walker M."/>
            <person name="Wu D."/>
            <person name="Yu G."/>
            <person name="Fraser C.M."/>
            <person name="Venter J.C."/>
            <person name="Davis R.W."/>
        </authorList>
    </citation>
    <scope>NUCLEOTIDE SEQUENCE [LARGE SCALE GENOMIC DNA]</scope>
    <source>
        <strain>cv. Columbia</strain>
    </source>
</reference>
<reference key="2">
    <citation type="journal article" date="2017" name="Plant J.">
        <title>Araport11: a complete reannotation of the Arabidopsis thaliana reference genome.</title>
        <authorList>
            <person name="Cheng C.Y."/>
            <person name="Krishnakumar V."/>
            <person name="Chan A.P."/>
            <person name="Thibaud-Nissen F."/>
            <person name="Schobel S."/>
            <person name="Town C.D."/>
        </authorList>
    </citation>
    <scope>GENOME REANNOTATION</scope>
    <source>
        <strain>cv. Columbia</strain>
    </source>
</reference>
<reference key="3">
    <citation type="submission" date="2004-04" db="EMBL/GenBank/DDBJ databases">
        <title>Reconstruction of cDNA sequences for hypothetical genes in Arabidopsis thaliana from 5' and 3' RACE products.</title>
        <authorList>
            <person name="Xiao Y.-L."/>
            <person name="Underwood B.A."/>
            <person name="Moskal W.A. Jr."/>
            <person name="Torian U."/>
            <person name="Redman J.C."/>
            <person name="Wu H.C."/>
            <person name="Utterback T."/>
            <person name="Town C.D."/>
        </authorList>
    </citation>
    <scope>NUCLEOTIDE SEQUENCE [LARGE SCALE MRNA]</scope>
    <source>
        <strain>cv. Columbia</strain>
    </source>
</reference>
<reference key="4">
    <citation type="submission" date="2004-06" db="EMBL/GenBank/DDBJ databases">
        <authorList>
            <person name="Underwood B.A."/>
            <person name="Xiao Y.-L."/>
            <person name="Moskal W.A. Jr."/>
            <person name="Monaghan E.L."/>
            <person name="Wang W."/>
            <person name="Redman J.C."/>
            <person name="Wu H.C."/>
            <person name="Utterback T."/>
            <person name="Town C.D."/>
        </authorList>
    </citation>
    <scope>NUCLEOTIDE SEQUENCE [LARGE SCALE MRNA]</scope>
    <source>
        <strain>cv. Columbia</strain>
    </source>
</reference>
<reference key="5">
    <citation type="journal article" date="2003" name="J. Mol. Evol.">
        <title>The carboxylesterase gene family from Arabidopsis thaliana.</title>
        <authorList>
            <person name="Marshall S.D."/>
            <person name="Putterill J.J."/>
            <person name="Plummer K.M."/>
            <person name="Newcomb R.D."/>
        </authorList>
    </citation>
    <scope>TISSUE SPECIFICITY</scope>
    <scope>GENE FAMILY</scope>
    <scope>NOMENCLATURE</scope>
</reference>
<name>CXE3_ARATH</name>
<dbReference type="EC" id="3.1.1.1"/>
<dbReference type="EMBL" id="AC011807">
    <property type="protein sequence ID" value="AAG13050.1"/>
    <property type="molecule type" value="Genomic_DNA"/>
</dbReference>
<dbReference type="EMBL" id="CP002684">
    <property type="protein sequence ID" value="AEE32454.1"/>
    <property type="molecule type" value="Genomic_DNA"/>
</dbReference>
<dbReference type="EMBL" id="AY600525">
    <property type="protein sequence ID" value="AAT68324.1"/>
    <property type="molecule type" value="mRNA"/>
</dbReference>
<dbReference type="EMBL" id="AY649310">
    <property type="protein sequence ID" value="AAT69227.1"/>
    <property type="molecule type" value="mRNA"/>
</dbReference>
<dbReference type="PIR" id="B96533">
    <property type="entry name" value="B96533"/>
</dbReference>
<dbReference type="RefSeq" id="NP_175387.1">
    <property type="nucleotide sequence ID" value="NM_103852.3"/>
</dbReference>
<dbReference type="SMR" id="Q9FX92"/>
<dbReference type="FunCoup" id="Q9FX92">
    <property type="interactions" value="23"/>
</dbReference>
<dbReference type="STRING" id="3702.Q9FX92"/>
<dbReference type="ESTHER" id="arath-F14J22.12">
    <property type="family name" value="Plant_carboxylesterase"/>
</dbReference>
<dbReference type="iPTMnet" id="Q9FX92"/>
<dbReference type="PaxDb" id="3702-AT1G49640.1"/>
<dbReference type="ProteomicsDB" id="220378"/>
<dbReference type="EnsemblPlants" id="AT1G49640.1">
    <property type="protein sequence ID" value="AT1G49640.1"/>
    <property type="gene ID" value="AT1G49640"/>
</dbReference>
<dbReference type="GeneID" id="841388"/>
<dbReference type="Gramene" id="AT1G49640.1">
    <property type="protein sequence ID" value="AT1G49640.1"/>
    <property type="gene ID" value="AT1G49640"/>
</dbReference>
<dbReference type="KEGG" id="ath:AT1G49640"/>
<dbReference type="Araport" id="AT1G49640"/>
<dbReference type="TAIR" id="AT1G49640"/>
<dbReference type="eggNOG" id="KOG1515">
    <property type="taxonomic scope" value="Eukaryota"/>
</dbReference>
<dbReference type="HOGENOM" id="CLU_012494_22_0_1"/>
<dbReference type="InParanoid" id="Q9FX92"/>
<dbReference type="OMA" id="HSDDWIN"/>
<dbReference type="PhylomeDB" id="Q9FX92"/>
<dbReference type="BioCyc" id="ARA:AT1G49640-MONOMER"/>
<dbReference type="PRO" id="PR:Q9FX92"/>
<dbReference type="Proteomes" id="UP000006548">
    <property type="component" value="Chromosome 1"/>
</dbReference>
<dbReference type="ExpressionAtlas" id="Q9FX92">
    <property type="expression patterns" value="baseline and differential"/>
</dbReference>
<dbReference type="GO" id="GO:0106435">
    <property type="term" value="F:carboxylesterase activity"/>
    <property type="evidence" value="ECO:0007669"/>
    <property type="project" value="UniProtKB-EC"/>
</dbReference>
<dbReference type="Gene3D" id="3.40.50.1820">
    <property type="entry name" value="alpha/beta hydrolase"/>
    <property type="match status" value="1"/>
</dbReference>
<dbReference type="InterPro" id="IPR013094">
    <property type="entry name" value="AB_hydrolase_3"/>
</dbReference>
<dbReference type="InterPro" id="IPR029058">
    <property type="entry name" value="AB_hydrolase_fold"/>
</dbReference>
<dbReference type="InterPro" id="IPR050466">
    <property type="entry name" value="Carboxylest/Gibb_receptor"/>
</dbReference>
<dbReference type="PANTHER" id="PTHR23024">
    <property type="entry name" value="ARYLACETAMIDE DEACETYLASE"/>
    <property type="match status" value="1"/>
</dbReference>
<dbReference type="PANTHER" id="PTHR23024:SF441">
    <property type="entry name" value="CARBOXYLESTERASE 3-RELATED"/>
    <property type="match status" value="1"/>
</dbReference>
<dbReference type="Pfam" id="PF07859">
    <property type="entry name" value="Abhydrolase_3"/>
    <property type="match status" value="1"/>
</dbReference>
<dbReference type="SUPFAM" id="SSF53474">
    <property type="entry name" value="alpha/beta-Hydrolases"/>
    <property type="match status" value="1"/>
</dbReference>
<accession>Q9FX92</accession>
<accession>Q6E298</accession>
<keyword id="KW-0007">Acetylation</keyword>
<keyword id="KW-0378">Hydrolase</keyword>
<keyword id="KW-1185">Reference proteome</keyword>
<keyword id="KW-0719">Serine esterase</keyword>
<evidence type="ECO:0000250" key="1"/>
<evidence type="ECO:0000250" key="2">
    <source>
        <dbReference type="UniProtKB" id="Q5NUF3"/>
    </source>
</evidence>
<evidence type="ECO:0000250" key="3">
    <source>
        <dbReference type="UniProtKB" id="Q9SMN0"/>
    </source>
</evidence>
<evidence type="ECO:0000269" key="4">
    <source>
    </source>
</evidence>
<evidence type="ECO:0000305" key="5"/>
<gene>
    <name type="primary">CXE3</name>
    <name type="ordered locus">At1g49640</name>
    <name type="ORF">F14J22.12</name>
</gene>